<comment type="function">
    <text evidence="1">Peptide chain release factor 1 directs the termination of translation in response to the peptide chain termination codons UAG and UAA.</text>
</comment>
<comment type="subcellular location">
    <subcellularLocation>
        <location evidence="1">Cytoplasm</location>
    </subcellularLocation>
</comment>
<comment type="PTM">
    <text evidence="1">Methylated by PrmC. Methylation increases the termination efficiency of RF1.</text>
</comment>
<comment type="similarity">
    <text evidence="1">Belongs to the prokaryotic/mitochondrial release factor family.</text>
</comment>
<dbReference type="EMBL" id="AM286280">
    <property type="protein sequence ID" value="CAL08184.1"/>
    <property type="molecule type" value="Genomic_DNA"/>
</dbReference>
<dbReference type="RefSeq" id="WP_003019960.1">
    <property type="nucleotide sequence ID" value="NC_008245.1"/>
</dbReference>
<dbReference type="SMR" id="Q14JR1"/>
<dbReference type="KEGG" id="ftf:FTF0168"/>
<dbReference type="HOGENOM" id="CLU_036856_0_1_6"/>
<dbReference type="GO" id="GO:0005737">
    <property type="term" value="C:cytoplasm"/>
    <property type="evidence" value="ECO:0007669"/>
    <property type="project" value="UniProtKB-SubCell"/>
</dbReference>
<dbReference type="GO" id="GO:0016149">
    <property type="term" value="F:translation release factor activity, codon specific"/>
    <property type="evidence" value="ECO:0007669"/>
    <property type="project" value="UniProtKB-UniRule"/>
</dbReference>
<dbReference type="FunFam" id="3.30.160.20:FF:000004">
    <property type="entry name" value="Peptide chain release factor 1"/>
    <property type="match status" value="1"/>
</dbReference>
<dbReference type="FunFam" id="3.30.70.1660:FF:000002">
    <property type="entry name" value="Peptide chain release factor 1"/>
    <property type="match status" value="1"/>
</dbReference>
<dbReference type="FunFam" id="3.30.70.1660:FF:000004">
    <property type="entry name" value="Peptide chain release factor 1"/>
    <property type="match status" value="1"/>
</dbReference>
<dbReference type="Gene3D" id="3.30.160.20">
    <property type="match status" value="1"/>
</dbReference>
<dbReference type="Gene3D" id="3.30.70.1660">
    <property type="match status" value="2"/>
</dbReference>
<dbReference type="Gene3D" id="6.10.140.1950">
    <property type="match status" value="1"/>
</dbReference>
<dbReference type="HAMAP" id="MF_00093">
    <property type="entry name" value="Rel_fac_1"/>
    <property type="match status" value="1"/>
</dbReference>
<dbReference type="InterPro" id="IPR005139">
    <property type="entry name" value="PCRF"/>
</dbReference>
<dbReference type="InterPro" id="IPR000352">
    <property type="entry name" value="Pep_chain_release_fac_I"/>
</dbReference>
<dbReference type="InterPro" id="IPR045853">
    <property type="entry name" value="Pep_chain_release_fac_I_sf"/>
</dbReference>
<dbReference type="InterPro" id="IPR050057">
    <property type="entry name" value="Prokaryotic/Mito_RF"/>
</dbReference>
<dbReference type="InterPro" id="IPR004373">
    <property type="entry name" value="RF-1"/>
</dbReference>
<dbReference type="NCBIfam" id="TIGR00019">
    <property type="entry name" value="prfA"/>
    <property type="match status" value="1"/>
</dbReference>
<dbReference type="NCBIfam" id="NF001859">
    <property type="entry name" value="PRK00591.1"/>
    <property type="match status" value="1"/>
</dbReference>
<dbReference type="PANTHER" id="PTHR43804">
    <property type="entry name" value="LD18447P"/>
    <property type="match status" value="1"/>
</dbReference>
<dbReference type="PANTHER" id="PTHR43804:SF7">
    <property type="entry name" value="LD18447P"/>
    <property type="match status" value="1"/>
</dbReference>
<dbReference type="Pfam" id="PF03462">
    <property type="entry name" value="PCRF"/>
    <property type="match status" value="1"/>
</dbReference>
<dbReference type="Pfam" id="PF00472">
    <property type="entry name" value="RF-1"/>
    <property type="match status" value="1"/>
</dbReference>
<dbReference type="SMART" id="SM00937">
    <property type="entry name" value="PCRF"/>
    <property type="match status" value="1"/>
</dbReference>
<dbReference type="SUPFAM" id="SSF75620">
    <property type="entry name" value="Release factor"/>
    <property type="match status" value="1"/>
</dbReference>
<dbReference type="PROSITE" id="PS00745">
    <property type="entry name" value="RF_PROK_I"/>
    <property type="match status" value="1"/>
</dbReference>
<accession>Q14JR1</accession>
<gene>
    <name evidence="1" type="primary">prfA</name>
    <name type="ordered locus">FTF0168</name>
</gene>
<name>RF1_FRAT1</name>
<protein>
    <recommendedName>
        <fullName evidence="1">Peptide chain release factor 1</fullName>
        <shortName evidence="1">RF-1</shortName>
    </recommendedName>
</protein>
<reference key="1">
    <citation type="journal article" date="2007" name="PLoS ONE">
        <title>Genome sequencing shows that European isolates of Francisella tularensis subspecies tularensis are almost identical to US laboratory strain Schu S4.</title>
        <authorList>
            <person name="Chaudhuri R.R."/>
            <person name="Ren C.-P."/>
            <person name="Desmond L."/>
            <person name="Vincent G.A."/>
            <person name="Silman N.J."/>
            <person name="Brehm J.K."/>
            <person name="Elmore M.J."/>
            <person name="Hudson M.J."/>
            <person name="Forsman M."/>
            <person name="Isherwood K.E."/>
            <person name="Gurycova D."/>
            <person name="Minton N.P."/>
            <person name="Titball R.W."/>
            <person name="Pallen M.J."/>
            <person name="Vipond R."/>
        </authorList>
    </citation>
    <scope>NUCLEOTIDE SEQUENCE [LARGE SCALE GENOMIC DNA]</scope>
    <source>
        <strain>FSC 198</strain>
    </source>
</reference>
<keyword id="KW-0963">Cytoplasm</keyword>
<keyword id="KW-0488">Methylation</keyword>
<keyword id="KW-0648">Protein biosynthesis</keyword>
<proteinExistence type="inferred from homology"/>
<organism>
    <name type="scientific">Francisella tularensis subsp. tularensis (strain FSC 198)</name>
    <dbReference type="NCBI Taxonomy" id="393115"/>
    <lineage>
        <taxon>Bacteria</taxon>
        <taxon>Pseudomonadati</taxon>
        <taxon>Pseudomonadota</taxon>
        <taxon>Gammaproteobacteria</taxon>
        <taxon>Thiotrichales</taxon>
        <taxon>Francisellaceae</taxon>
        <taxon>Francisella</taxon>
    </lineage>
</organism>
<feature type="chain" id="PRO_0000263277" description="Peptide chain release factor 1">
    <location>
        <begin position="1"/>
        <end position="361"/>
    </location>
</feature>
<feature type="region of interest" description="Disordered" evidence="2">
    <location>
        <begin position="287"/>
        <end position="313"/>
    </location>
</feature>
<feature type="compositionally biased region" description="Basic and acidic residues" evidence="2">
    <location>
        <begin position="287"/>
        <end position="297"/>
    </location>
</feature>
<feature type="modified residue" description="N5-methylglutamine" evidence="1">
    <location>
        <position position="237"/>
    </location>
</feature>
<evidence type="ECO:0000255" key="1">
    <source>
        <dbReference type="HAMAP-Rule" id="MF_00093"/>
    </source>
</evidence>
<evidence type="ECO:0000256" key="2">
    <source>
        <dbReference type="SAM" id="MobiDB-lite"/>
    </source>
</evidence>
<sequence>MKDSIKAKLQSLIERHEEVSALLSEAGIISDQNKFRDLSKEYSHLEPIVKAFKKYTQALEDKQAAYEMLNEKDAELVEMAKEELKLANEAIEKLESELQIFLLPRDPNDDANVFLEIRAGTGGDEASIFSGDLFKMYSKYAEQRGWKIEVISASEGEHGGYKEIISRIYGDGVYSQLKFESGAHRVQRVPATESQGRIHTSACTVAVMPEADEVEGIDINPADIKVDTFRASGAGGQHVNKTDSAIRITHIPTGVVVECQDQRSQHKNRAAAMSMLKSKLLQAEIDKQQKEQSDTRKSLVGSGDRSERIRTYNYPQGRVTDHRINLTLYKLDEVMEGSLDSIIQPLVLEHQADLLATMSDE</sequence>